<keyword id="KW-0028">Amino-acid biosynthesis</keyword>
<keyword id="KW-0963">Cytoplasm</keyword>
<keyword id="KW-0413">Isomerase</keyword>
<keyword id="KW-0486">Methionine biosynthesis</keyword>
<keyword id="KW-0539">Nucleus</keyword>
<keyword id="KW-1185">Reference proteome</keyword>
<protein>
    <recommendedName>
        <fullName evidence="1">Methylthioribose-1-phosphate isomerase</fullName>
        <shortName evidence="1">M1Pi</shortName>
        <shortName evidence="1">MTR-1-P isomerase</shortName>
        <ecNumber evidence="1">5.3.1.23</ecNumber>
    </recommendedName>
    <alternativeName>
        <fullName evidence="1">S-methyl-5-thioribose-1-phosphate isomerase</fullName>
    </alternativeName>
    <alternativeName>
        <fullName evidence="1">Translation initiation factor eIF-2B subunit alpha/beta/delta-like protein</fullName>
    </alternativeName>
</protein>
<sequence>MSLQSIKYNRGSLEILDQLLLPVQSKYVAVRGVEDGWKVINKMQVRGAPAIAIVGCLSLAVEIYPEEFESKKSLRQEIEGKLNYLVSARPTAVNMKIAADELLSLANDLTKAEDVSVPDMKQRFLNATEAMLQKDIADNRAIGANGAQAILKRVATTLGAAGTSGNGSVRVLTHCNTGSLATAGYGTALGVIRNLHELGKLEHVYCTETRPYNQGARLTAYELVHEKFPATLVLDSMVAALLRAKNVAAVVVGADRVAANGDTANKIGTYQIAVVAKHHGVPFYVAAPLTSIDLQIPSGDHIIIEERPDREMTHVGEHRIAAPGINCWNPAFDVTPASLITGIITERGVFEPQELKEAITKLLGL</sequence>
<dbReference type="EC" id="5.3.1.23" evidence="1"/>
<dbReference type="EMBL" id="CH964251">
    <property type="protein sequence ID" value="EDW83258.1"/>
    <property type="molecule type" value="Genomic_DNA"/>
</dbReference>
<dbReference type="SMR" id="B4NG41"/>
<dbReference type="STRING" id="7260.B4NG41"/>
<dbReference type="EnsemblMetazoa" id="FBtr0253070">
    <property type="protein sequence ID" value="FBpp0251562"/>
    <property type="gene ID" value="FBgn0224398"/>
</dbReference>
<dbReference type="EnsemblMetazoa" id="XM_002072236.4">
    <property type="protein sequence ID" value="XP_002072272.1"/>
    <property type="gene ID" value="LOC6649831"/>
</dbReference>
<dbReference type="EnsemblMetazoa" id="XM_047009273.1">
    <property type="protein sequence ID" value="XP_046865229.1"/>
    <property type="gene ID" value="LOC6649831"/>
</dbReference>
<dbReference type="EnsemblMetazoa" id="XM_047009274.1">
    <property type="protein sequence ID" value="XP_046865230.1"/>
    <property type="gene ID" value="LOC6649831"/>
</dbReference>
<dbReference type="GeneID" id="6649831"/>
<dbReference type="KEGG" id="dwi:6649831"/>
<dbReference type="eggNOG" id="KOG1468">
    <property type="taxonomic scope" value="Eukaryota"/>
</dbReference>
<dbReference type="HOGENOM" id="CLU_016218_1_3_1"/>
<dbReference type="OMA" id="CETRPLN"/>
<dbReference type="OrthoDB" id="2461at2759"/>
<dbReference type="PhylomeDB" id="B4NG41"/>
<dbReference type="UniPathway" id="UPA00904">
    <property type="reaction ID" value="UER00874"/>
</dbReference>
<dbReference type="Proteomes" id="UP000007798">
    <property type="component" value="Unassembled WGS sequence"/>
</dbReference>
<dbReference type="GO" id="GO:0005737">
    <property type="term" value="C:cytoplasm"/>
    <property type="evidence" value="ECO:0007669"/>
    <property type="project" value="UniProtKB-SubCell"/>
</dbReference>
<dbReference type="GO" id="GO:0005634">
    <property type="term" value="C:nucleus"/>
    <property type="evidence" value="ECO:0007669"/>
    <property type="project" value="UniProtKB-SubCell"/>
</dbReference>
<dbReference type="GO" id="GO:0046523">
    <property type="term" value="F:S-methyl-5-thioribose-1-phosphate isomerase activity"/>
    <property type="evidence" value="ECO:0007669"/>
    <property type="project" value="UniProtKB-UniRule"/>
</dbReference>
<dbReference type="GO" id="GO:0019509">
    <property type="term" value="P:L-methionine salvage from methylthioadenosine"/>
    <property type="evidence" value="ECO:0007669"/>
    <property type="project" value="UniProtKB-UniRule"/>
</dbReference>
<dbReference type="FunFam" id="1.20.120.420:FF:000010">
    <property type="entry name" value="Methylthioribose-1-phosphate isomerase"/>
    <property type="match status" value="1"/>
</dbReference>
<dbReference type="FunFam" id="3.40.50.10470:FF:000003">
    <property type="entry name" value="Methylthioribose-1-phosphate isomerase"/>
    <property type="match status" value="1"/>
</dbReference>
<dbReference type="Gene3D" id="1.20.120.420">
    <property type="entry name" value="translation initiation factor eif-2b, domain 1"/>
    <property type="match status" value="1"/>
</dbReference>
<dbReference type="Gene3D" id="3.40.50.10470">
    <property type="entry name" value="Translation initiation factor eif-2b, domain 2"/>
    <property type="match status" value="1"/>
</dbReference>
<dbReference type="HAMAP" id="MF_01678">
    <property type="entry name" value="Salvage_MtnA"/>
    <property type="match status" value="1"/>
</dbReference>
<dbReference type="InterPro" id="IPR000649">
    <property type="entry name" value="IF-2B-related"/>
</dbReference>
<dbReference type="InterPro" id="IPR005251">
    <property type="entry name" value="IF-M1Pi"/>
</dbReference>
<dbReference type="InterPro" id="IPR042529">
    <property type="entry name" value="IF_2B-like_C"/>
</dbReference>
<dbReference type="InterPro" id="IPR011559">
    <property type="entry name" value="Initiation_fac_2B_a/b/d"/>
</dbReference>
<dbReference type="InterPro" id="IPR027363">
    <property type="entry name" value="M1Pi_N"/>
</dbReference>
<dbReference type="InterPro" id="IPR037171">
    <property type="entry name" value="NagB/RpiA_transferase-like"/>
</dbReference>
<dbReference type="NCBIfam" id="TIGR00524">
    <property type="entry name" value="eIF-2B_rel"/>
    <property type="match status" value="1"/>
</dbReference>
<dbReference type="NCBIfam" id="NF004326">
    <property type="entry name" value="PRK05720.1"/>
    <property type="match status" value="1"/>
</dbReference>
<dbReference type="NCBIfam" id="TIGR00512">
    <property type="entry name" value="salvage_mtnA"/>
    <property type="match status" value="1"/>
</dbReference>
<dbReference type="PANTHER" id="PTHR43475">
    <property type="entry name" value="METHYLTHIORIBOSE-1-PHOSPHATE ISOMERASE"/>
    <property type="match status" value="1"/>
</dbReference>
<dbReference type="PANTHER" id="PTHR43475:SF1">
    <property type="entry name" value="METHYLTHIORIBOSE-1-PHOSPHATE ISOMERASE"/>
    <property type="match status" value="1"/>
</dbReference>
<dbReference type="Pfam" id="PF01008">
    <property type="entry name" value="IF-2B"/>
    <property type="match status" value="1"/>
</dbReference>
<dbReference type="SUPFAM" id="SSF100950">
    <property type="entry name" value="NagB/RpiA/CoA transferase-like"/>
    <property type="match status" value="1"/>
</dbReference>
<evidence type="ECO:0000255" key="1">
    <source>
        <dbReference type="HAMAP-Rule" id="MF_03119"/>
    </source>
</evidence>
<comment type="function">
    <text evidence="1">Catalyzes the interconversion of methylthioribose-1-phosphate (MTR-1-P) into methylthioribulose-1-phosphate (MTRu-1-P).</text>
</comment>
<comment type="catalytic activity">
    <reaction evidence="1">
        <text>5-(methylsulfanyl)-alpha-D-ribose 1-phosphate = 5-(methylsulfanyl)-D-ribulose 1-phosphate</text>
        <dbReference type="Rhea" id="RHEA:19989"/>
        <dbReference type="ChEBI" id="CHEBI:58533"/>
        <dbReference type="ChEBI" id="CHEBI:58548"/>
        <dbReference type="EC" id="5.3.1.23"/>
    </reaction>
</comment>
<comment type="pathway">
    <text evidence="1">Amino-acid biosynthesis; L-methionine biosynthesis via salvage pathway; L-methionine from S-methyl-5-thio-alpha-D-ribose 1-phosphate: step 1/6.</text>
</comment>
<comment type="subcellular location">
    <subcellularLocation>
        <location evidence="1">Cytoplasm</location>
    </subcellularLocation>
    <subcellularLocation>
        <location evidence="1">Nucleus</location>
    </subcellularLocation>
</comment>
<comment type="similarity">
    <text evidence="1">Belongs to the eIF-2B alpha/beta/delta subunits family. MtnA subfamily.</text>
</comment>
<organism>
    <name type="scientific">Drosophila willistoni</name>
    <name type="common">Fruit fly</name>
    <dbReference type="NCBI Taxonomy" id="7260"/>
    <lineage>
        <taxon>Eukaryota</taxon>
        <taxon>Metazoa</taxon>
        <taxon>Ecdysozoa</taxon>
        <taxon>Arthropoda</taxon>
        <taxon>Hexapoda</taxon>
        <taxon>Insecta</taxon>
        <taxon>Pterygota</taxon>
        <taxon>Neoptera</taxon>
        <taxon>Endopterygota</taxon>
        <taxon>Diptera</taxon>
        <taxon>Brachycera</taxon>
        <taxon>Muscomorpha</taxon>
        <taxon>Ephydroidea</taxon>
        <taxon>Drosophilidae</taxon>
        <taxon>Drosophila</taxon>
        <taxon>Sophophora</taxon>
    </lineage>
</organism>
<feature type="chain" id="PRO_0000401985" description="Methylthioribose-1-phosphate isomerase">
    <location>
        <begin position="1"/>
        <end position="365"/>
    </location>
</feature>
<feature type="active site" description="Proton donor" evidence="1">
    <location>
        <position position="255"/>
    </location>
</feature>
<feature type="site" description="Transition state stabilizer" evidence="1">
    <location>
        <position position="175"/>
    </location>
</feature>
<accession>B4NG41</accession>
<proteinExistence type="inferred from homology"/>
<name>MTNA_DROWI</name>
<reference key="1">
    <citation type="journal article" date="2007" name="Nature">
        <title>Evolution of genes and genomes on the Drosophila phylogeny.</title>
        <authorList>
            <consortium name="Drosophila 12 genomes consortium"/>
        </authorList>
    </citation>
    <scope>NUCLEOTIDE SEQUENCE [LARGE SCALE GENOMIC DNA]</scope>
    <source>
        <strain>Tucson 14030-0811.24</strain>
    </source>
</reference>
<gene>
    <name type="ORF">GK22419</name>
</gene>